<organism>
    <name type="scientific">Rattus norvegicus</name>
    <name type="common">Rat</name>
    <dbReference type="NCBI Taxonomy" id="10116"/>
    <lineage>
        <taxon>Eukaryota</taxon>
        <taxon>Metazoa</taxon>
        <taxon>Chordata</taxon>
        <taxon>Craniata</taxon>
        <taxon>Vertebrata</taxon>
        <taxon>Euteleostomi</taxon>
        <taxon>Mammalia</taxon>
        <taxon>Eutheria</taxon>
        <taxon>Euarchontoglires</taxon>
        <taxon>Glires</taxon>
        <taxon>Rodentia</taxon>
        <taxon>Myomorpha</taxon>
        <taxon>Muroidea</taxon>
        <taxon>Muridae</taxon>
        <taxon>Murinae</taxon>
        <taxon>Rattus</taxon>
    </lineage>
</organism>
<proteinExistence type="evidence at transcript level"/>
<evidence type="ECO:0000250" key="1">
    <source>
        <dbReference type="UniProtKB" id="Q99675"/>
    </source>
</evidence>
<evidence type="ECO:0000255" key="2">
    <source>
        <dbReference type="PROSITE-ProRule" id="PRU00175"/>
    </source>
</evidence>
<evidence type="ECO:0000269" key="3">
    <source>
    </source>
</evidence>
<gene>
    <name type="primary">Cgrrf1</name>
    <name type="synonym">Cgr19</name>
</gene>
<comment type="function">
    <text evidence="3">Able to inhibit growth in several cell lines.</text>
</comment>
<comment type="subcellular location">
    <subcellularLocation>
        <location evidence="1">Nucleus</location>
    </subcellularLocation>
    <subcellularLocation>
        <location evidence="1">Endoplasmic reticulum</location>
    </subcellularLocation>
</comment>
<comment type="tissue specificity">
    <text evidence="3">Highly expressed in testis, lower levels of expression is seen in skeletal muscle, liver, lung and brain.</text>
</comment>
<comment type="induction">
    <text evidence="3">By p53.</text>
</comment>
<reference key="1">
    <citation type="journal article" date="1996" name="Cancer Res.">
        <title>Induction of cell growth regulatory genes by p53.</title>
        <authorList>
            <person name="Madden S.L."/>
            <person name="Galella E.A."/>
            <person name="Riley D."/>
            <person name="Bertelsen A.H."/>
            <person name="Beaudry G.A."/>
        </authorList>
    </citation>
    <scope>NUCLEOTIDE SEQUENCE [MRNA]</scope>
    <scope>FUNCTION</scope>
    <scope>TISSUE SPECIFICITY</scope>
    <scope>INDUCTION</scope>
    <source>
        <strain>Fischer</strain>
        <tissue>Fibroblast</tissue>
    </source>
</reference>
<sequence length="332" mass="37443">MAAVFLVTLYEYSPLFYIAVVFTCFIATTGLVLGWLGWDVPVILRNSEETQFSTRAFKKQMRQVKNPFGLEITNSSAASLATGVTLTTDCLEDSRLTCYWGCSVQKLYEALQKHVYCFRISTPQALEEALYSDYLHREQYFIKKHSKEEIYCQLPSSTGVEDFGPVPRSRYPLVALLTLADEDDREIYDIISMVSVIHIPDKTYKLPCRILYQYLILAQGQFYDLKQLFMSANNSATPSRDQSPADGSVEHSLLEKAGLAGAEVDPVEESSKDCVVCQNGGVNWVLLPCRHACLCDSCVCYFKQCPMCRQFVQESFALCGQKEADKDILETS</sequence>
<protein>
    <recommendedName>
        <fullName>Cell growth regulator with RING finger domain protein 1</fullName>
    </recommendedName>
    <alternativeName>
        <fullName>Cell growth regulatory gene 19 protein</fullName>
    </alternativeName>
</protein>
<accession>P97587</accession>
<keyword id="KW-0131">Cell cycle</keyword>
<keyword id="KW-0256">Endoplasmic reticulum</keyword>
<keyword id="KW-0338">Growth arrest</keyword>
<keyword id="KW-0479">Metal-binding</keyword>
<keyword id="KW-0539">Nucleus</keyword>
<keyword id="KW-1185">Reference proteome</keyword>
<keyword id="KW-0862">Zinc</keyword>
<keyword id="KW-0863">Zinc-finger</keyword>
<feature type="chain" id="PRO_0000055871" description="Cell growth regulator with RING finger domain protein 1">
    <location>
        <begin position="1"/>
        <end position="332"/>
    </location>
</feature>
<feature type="zinc finger region" description="RING-type" evidence="2">
    <location>
        <begin position="274"/>
        <end position="309"/>
    </location>
</feature>
<name>CGRF1_RAT</name>
<dbReference type="EMBL" id="U66471">
    <property type="protein sequence ID" value="AAC52951.1"/>
    <property type="molecule type" value="mRNA"/>
</dbReference>
<dbReference type="RefSeq" id="NP_446351.1">
    <property type="nucleotide sequence ID" value="NM_053899.1"/>
</dbReference>
<dbReference type="SMR" id="P97587"/>
<dbReference type="FunCoup" id="P97587">
    <property type="interactions" value="1231"/>
</dbReference>
<dbReference type="STRING" id="10116.ENSRNOP00000013912"/>
<dbReference type="GlyGen" id="P97587">
    <property type="glycosylation" value="1 site"/>
</dbReference>
<dbReference type="iPTMnet" id="P97587"/>
<dbReference type="PhosphoSitePlus" id="P97587"/>
<dbReference type="PaxDb" id="10116-ENSRNOP00000013912"/>
<dbReference type="GeneID" id="116679"/>
<dbReference type="KEGG" id="rno:116679"/>
<dbReference type="AGR" id="RGD:620803"/>
<dbReference type="CTD" id="10668"/>
<dbReference type="RGD" id="620803">
    <property type="gene designation" value="Cgrrf1"/>
</dbReference>
<dbReference type="eggNOG" id="KOG4265">
    <property type="taxonomic scope" value="Eukaryota"/>
</dbReference>
<dbReference type="InParanoid" id="P97587"/>
<dbReference type="PhylomeDB" id="P97587"/>
<dbReference type="PRO" id="PR:P97587"/>
<dbReference type="Proteomes" id="UP000002494">
    <property type="component" value="Unplaced"/>
</dbReference>
<dbReference type="GO" id="GO:0005783">
    <property type="term" value="C:endoplasmic reticulum"/>
    <property type="evidence" value="ECO:0000250"/>
    <property type="project" value="UniProtKB"/>
</dbReference>
<dbReference type="GO" id="GO:0005634">
    <property type="term" value="C:nucleus"/>
    <property type="evidence" value="ECO:0007669"/>
    <property type="project" value="UniProtKB-SubCell"/>
</dbReference>
<dbReference type="GO" id="GO:0008270">
    <property type="term" value="F:zinc ion binding"/>
    <property type="evidence" value="ECO:0007669"/>
    <property type="project" value="UniProtKB-KW"/>
</dbReference>
<dbReference type="GO" id="GO:0030308">
    <property type="term" value="P:negative regulation of cell growth"/>
    <property type="evidence" value="ECO:0000314"/>
    <property type="project" value="RGD"/>
</dbReference>
<dbReference type="GO" id="GO:0051726">
    <property type="term" value="P:regulation of cell cycle"/>
    <property type="evidence" value="ECO:0007669"/>
    <property type="project" value="UniProtKB-KW"/>
</dbReference>
<dbReference type="CDD" id="cd16787">
    <property type="entry name" value="mRING-HC-C3HC5_CGRF1"/>
    <property type="match status" value="1"/>
</dbReference>
<dbReference type="FunFam" id="3.30.40.10:FF:000421">
    <property type="entry name" value="Cell growth regulator with ring finger domain 1"/>
    <property type="match status" value="1"/>
</dbReference>
<dbReference type="Gene3D" id="3.30.40.10">
    <property type="entry name" value="Zinc/RING finger domain, C3HC4 (zinc finger)"/>
    <property type="match status" value="1"/>
</dbReference>
<dbReference type="InterPro" id="IPR042496">
    <property type="entry name" value="CGRF1"/>
</dbReference>
<dbReference type="InterPro" id="IPR001841">
    <property type="entry name" value="Znf_RING"/>
</dbReference>
<dbReference type="InterPro" id="IPR013083">
    <property type="entry name" value="Znf_RING/FYVE/PHD"/>
</dbReference>
<dbReference type="PANTHER" id="PTHR15379">
    <property type="entry name" value="CELL GROWTH REGULATOR WITH RING FINGER DOMAIN PROTEIN 1"/>
    <property type="match status" value="1"/>
</dbReference>
<dbReference type="PANTHER" id="PTHR15379:SF2">
    <property type="entry name" value="CELL GROWTH REGULATOR WITH RING FINGER DOMAIN PROTEIN 1"/>
    <property type="match status" value="1"/>
</dbReference>
<dbReference type="Pfam" id="PF13920">
    <property type="entry name" value="zf-C3HC4_3"/>
    <property type="match status" value="1"/>
</dbReference>
<dbReference type="SUPFAM" id="SSF57850">
    <property type="entry name" value="RING/U-box"/>
    <property type="match status" value="1"/>
</dbReference>
<dbReference type="PROSITE" id="PS50089">
    <property type="entry name" value="ZF_RING_2"/>
    <property type="match status" value="1"/>
</dbReference>